<proteinExistence type="inferred from homology"/>
<keyword id="KW-0067">ATP-binding</keyword>
<keyword id="KW-0547">Nucleotide-binding</keyword>
<keyword id="KW-1185">Reference proteome</keyword>
<keyword id="KW-0813">Transport</keyword>
<comment type="similarity">
    <text evidence="2">Belongs to the ABC transporter superfamily.</text>
</comment>
<feature type="chain" id="PRO_0000093154" description="Uncharacterized ABC transporter ATP-binding protein YbbA">
    <location>
        <begin position="1"/>
        <end position="228"/>
    </location>
</feature>
<feature type="domain" description="ABC transporter" evidence="1">
    <location>
        <begin position="7"/>
        <end position="228"/>
    </location>
</feature>
<feature type="binding site" evidence="1">
    <location>
        <begin position="43"/>
        <end position="50"/>
    </location>
    <ligand>
        <name>ATP</name>
        <dbReference type="ChEBI" id="CHEBI:30616"/>
    </ligand>
</feature>
<protein>
    <recommendedName>
        <fullName>Uncharacterized ABC transporter ATP-binding protein YbbA</fullName>
    </recommendedName>
</protein>
<sequence>MPAENIVEVHHLKKSVGQGEHELSILTGVELVVKRGETIALVGESGSGKSTLLAILAGLDDGSSGEVSLVGQPLHNMDEEARAKLRAKHVGFVFQSFMLIPTLNALENVELPALLRGESSAESRNGAKALLEQLGLGKRLDHLPAQLSGGEQQRVALARAFNGRPDVLFADEPTGNLDRQTGDKIADLLFSLNREHGTTLIMVTHDLQLAARCDRCLRLVNGQLQEEA</sequence>
<name>YBBA_SHIFL</name>
<reference key="1">
    <citation type="journal article" date="2002" name="Nucleic Acids Res.">
        <title>Genome sequence of Shigella flexneri 2a: insights into pathogenicity through comparison with genomes of Escherichia coli K12 and O157.</title>
        <authorList>
            <person name="Jin Q."/>
            <person name="Yuan Z."/>
            <person name="Xu J."/>
            <person name="Wang Y."/>
            <person name="Shen Y."/>
            <person name="Lu W."/>
            <person name="Wang J."/>
            <person name="Liu H."/>
            <person name="Yang J."/>
            <person name="Yang F."/>
            <person name="Zhang X."/>
            <person name="Zhang J."/>
            <person name="Yang G."/>
            <person name="Wu H."/>
            <person name="Qu D."/>
            <person name="Dong J."/>
            <person name="Sun L."/>
            <person name="Xue Y."/>
            <person name="Zhao A."/>
            <person name="Gao Y."/>
            <person name="Zhu J."/>
            <person name="Kan B."/>
            <person name="Ding K."/>
            <person name="Chen S."/>
            <person name="Cheng H."/>
            <person name="Yao Z."/>
            <person name="He B."/>
            <person name="Chen R."/>
            <person name="Ma D."/>
            <person name="Qiang B."/>
            <person name="Wen Y."/>
            <person name="Hou Y."/>
            <person name="Yu J."/>
        </authorList>
    </citation>
    <scope>NUCLEOTIDE SEQUENCE [LARGE SCALE GENOMIC DNA]</scope>
    <source>
        <strain>301 / Serotype 2a</strain>
    </source>
</reference>
<reference key="2">
    <citation type="journal article" date="2003" name="Infect. Immun.">
        <title>Complete genome sequence and comparative genomics of Shigella flexneri serotype 2a strain 2457T.</title>
        <authorList>
            <person name="Wei J."/>
            <person name="Goldberg M.B."/>
            <person name="Burland V."/>
            <person name="Venkatesan M.M."/>
            <person name="Deng W."/>
            <person name="Fournier G."/>
            <person name="Mayhew G.F."/>
            <person name="Plunkett G. III"/>
            <person name="Rose D.J."/>
            <person name="Darling A."/>
            <person name="Mau B."/>
            <person name="Perna N.T."/>
            <person name="Payne S.M."/>
            <person name="Runyen-Janecky L.J."/>
            <person name="Zhou S."/>
            <person name="Schwartz D.C."/>
            <person name="Blattner F.R."/>
        </authorList>
    </citation>
    <scope>NUCLEOTIDE SEQUENCE [LARGE SCALE GENOMIC DNA]</scope>
    <source>
        <strain>ATCC 700930 / 2457T / Serotype 2a</strain>
    </source>
</reference>
<gene>
    <name type="primary">ybbA</name>
    <name type="ordered locus">SF0439</name>
    <name type="ordered locus">S0447</name>
</gene>
<dbReference type="EMBL" id="AE005674">
    <property type="protein sequence ID" value="AAN42094.1"/>
    <property type="molecule type" value="Genomic_DNA"/>
</dbReference>
<dbReference type="EMBL" id="AE014073">
    <property type="protein sequence ID" value="AAP15971.1"/>
    <property type="molecule type" value="Genomic_DNA"/>
</dbReference>
<dbReference type="RefSeq" id="NP_706387.1">
    <property type="nucleotide sequence ID" value="NC_004337.2"/>
</dbReference>
<dbReference type="RefSeq" id="WP_001110573.1">
    <property type="nucleotide sequence ID" value="NZ_WPGW01000015.1"/>
</dbReference>
<dbReference type="SMR" id="P0A9U0"/>
<dbReference type="STRING" id="198214.SF0439"/>
<dbReference type="PaxDb" id="198214-SF0439"/>
<dbReference type="GeneID" id="1027538"/>
<dbReference type="GeneID" id="93776954"/>
<dbReference type="KEGG" id="sfl:SF0439"/>
<dbReference type="KEGG" id="sfx:S0447"/>
<dbReference type="PATRIC" id="fig|198214.7.peg.503"/>
<dbReference type="HOGENOM" id="CLU_000604_1_22_6"/>
<dbReference type="Proteomes" id="UP000001006">
    <property type="component" value="Chromosome"/>
</dbReference>
<dbReference type="Proteomes" id="UP000002673">
    <property type="component" value="Chromosome"/>
</dbReference>
<dbReference type="GO" id="GO:0005524">
    <property type="term" value="F:ATP binding"/>
    <property type="evidence" value="ECO:0007669"/>
    <property type="project" value="UniProtKB-KW"/>
</dbReference>
<dbReference type="GO" id="GO:0016887">
    <property type="term" value="F:ATP hydrolysis activity"/>
    <property type="evidence" value="ECO:0007669"/>
    <property type="project" value="InterPro"/>
</dbReference>
<dbReference type="CDD" id="cd03255">
    <property type="entry name" value="ABC_MJ0796_LolCDE_FtsE"/>
    <property type="match status" value="1"/>
</dbReference>
<dbReference type="FunFam" id="3.40.50.300:FF:000423">
    <property type="entry name" value="ABC transporter ATP-binding protein YbbA"/>
    <property type="match status" value="1"/>
</dbReference>
<dbReference type="Gene3D" id="3.40.50.300">
    <property type="entry name" value="P-loop containing nucleotide triphosphate hydrolases"/>
    <property type="match status" value="1"/>
</dbReference>
<dbReference type="InterPro" id="IPR003593">
    <property type="entry name" value="AAA+_ATPase"/>
</dbReference>
<dbReference type="InterPro" id="IPR003439">
    <property type="entry name" value="ABC_transporter-like_ATP-bd"/>
</dbReference>
<dbReference type="InterPro" id="IPR017871">
    <property type="entry name" value="ABC_transporter-like_CS"/>
</dbReference>
<dbReference type="InterPro" id="IPR017911">
    <property type="entry name" value="MacB-like_ATP-bd"/>
</dbReference>
<dbReference type="InterPro" id="IPR027417">
    <property type="entry name" value="P-loop_NTPase"/>
</dbReference>
<dbReference type="NCBIfam" id="NF007879">
    <property type="entry name" value="PRK10584.1"/>
    <property type="match status" value="1"/>
</dbReference>
<dbReference type="PANTHER" id="PTHR42798:SF2">
    <property type="entry name" value="ABC TRANSPORTER ATP-BINDING PROTEIN MG467-RELATED"/>
    <property type="match status" value="1"/>
</dbReference>
<dbReference type="PANTHER" id="PTHR42798">
    <property type="entry name" value="LIPOPROTEIN-RELEASING SYSTEM ATP-BINDING PROTEIN LOLD"/>
    <property type="match status" value="1"/>
</dbReference>
<dbReference type="Pfam" id="PF00005">
    <property type="entry name" value="ABC_tran"/>
    <property type="match status" value="1"/>
</dbReference>
<dbReference type="SMART" id="SM00382">
    <property type="entry name" value="AAA"/>
    <property type="match status" value="1"/>
</dbReference>
<dbReference type="SUPFAM" id="SSF52540">
    <property type="entry name" value="P-loop containing nucleoside triphosphate hydrolases"/>
    <property type="match status" value="1"/>
</dbReference>
<dbReference type="PROSITE" id="PS00211">
    <property type="entry name" value="ABC_TRANSPORTER_1"/>
    <property type="match status" value="1"/>
</dbReference>
<dbReference type="PROSITE" id="PS50893">
    <property type="entry name" value="ABC_TRANSPORTER_2"/>
    <property type="match status" value="1"/>
</dbReference>
<organism>
    <name type="scientific">Shigella flexneri</name>
    <dbReference type="NCBI Taxonomy" id="623"/>
    <lineage>
        <taxon>Bacteria</taxon>
        <taxon>Pseudomonadati</taxon>
        <taxon>Pseudomonadota</taxon>
        <taxon>Gammaproteobacteria</taxon>
        <taxon>Enterobacterales</taxon>
        <taxon>Enterobacteriaceae</taxon>
        <taxon>Shigella</taxon>
    </lineage>
</organism>
<accession>P0A9U0</accession>
<accession>P31219</accession>
<accession>P77322</accession>
<evidence type="ECO:0000255" key="1">
    <source>
        <dbReference type="PROSITE-ProRule" id="PRU00434"/>
    </source>
</evidence>
<evidence type="ECO:0000305" key="2"/>